<name>SPSS2_ARCFU</name>
<protein>
    <recommendedName>
        <fullName evidence="1">O-phospho-L-seryl-tRNA:Cys-tRNA synthase 2</fullName>
        <ecNumber evidence="1">2.5.1.73</ecNumber>
    </recommendedName>
    <alternativeName>
        <fullName evidence="1">Sep-tRNA:Cys-tRNA synthase 2</fullName>
        <shortName evidence="1">SepCysS 2</shortName>
    </alternativeName>
</protein>
<organism>
    <name type="scientific">Archaeoglobus fulgidus (strain ATCC 49558 / DSM 4304 / JCM 9628 / NBRC 100126 / VC-16)</name>
    <dbReference type="NCBI Taxonomy" id="224325"/>
    <lineage>
        <taxon>Archaea</taxon>
        <taxon>Methanobacteriati</taxon>
        <taxon>Methanobacteriota</taxon>
        <taxon>Archaeoglobi</taxon>
        <taxon>Archaeoglobales</taxon>
        <taxon>Archaeoglobaceae</taxon>
        <taxon>Archaeoglobus</taxon>
    </lineage>
</organism>
<accession>O30056</accession>
<gene>
    <name type="ordered locus">AF_0181</name>
</gene>
<reference key="1">
    <citation type="journal article" date="1997" name="Nature">
        <title>The complete genome sequence of the hyperthermophilic, sulphate-reducing archaeon Archaeoglobus fulgidus.</title>
        <authorList>
            <person name="Klenk H.-P."/>
            <person name="Clayton R.A."/>
            <person name="Tomb J.-F."/>
            <person name="White O."/>
            <person name="Nelson K.E."/>
            <person name="Ketchum K.A."/>
            <person name="Dodson R.J."/>
            <person name="Gwinn M.L."/>
            <person name="Hickey E.K."/>
            <person name="Peterson J.D."/>
            <person name="Richardson D.L."/>
            <person name="Kerlavage A.R."/>
            <person name="Graham D.E."/>
            <person name="Kyrpides N.C."/>
            <person name="Fleischmann R.D."/>
            <person name="Quackenbush J."/>
            <person name="Lee N.H."/>
            <person name="Sutton G.G."/>
            <person name="Gill S.R."/>
            <person name="Kirkness E.F."/>
            <person name="Dougherty B.A."/>
            <person name="McKenney K."/>
            <person name="Adams M.D."/>
            <person name="Loftus B.J."/>
            <person name="Peterson S.N."/>
            <person name="Reich C.I."/>
            <person name="McNeil L.K."/>
            <person name="Badger J.H."/>
            <person name="Glodek A."/>
            <person name="Zhou L."/>
            <person name="Overbeek R."/>
            <person name="Gocayne J.D."/>
            <person name="Weidman J.F."/>
            <person name="McDonald L.A."/>
            <person name="Utterback T.R."/>
            <person name="Cotton M.D."/>
            <person name="Spriggs T."/>
            <person name="Artiach P."/>
            <person name="Kaine B.P."/>
            <person name="Sykes S.M."/>
            <person name="Sadow P.W."/>
            <person name="D'Andrea K.P."/>
            <person name="Bowman C."/>
            <person name="Fujii C."/>
            <person name="Garland S.A."/>
            <person name="Mason T.M."/>
            <person name="Olsen G.J."/>
            <person name="Fraser C.M."/>
            <person name="Smith H.O."/>
            <person name="Woese C.R."/>
            <person name="Venter J.C."/>
        </authorList>
    </citation>
    <scope>NUCLEOTIDE SEQUENCE [LARGE SCALE GENOMIC DNA]</scope>
    <source>
        <strain>ATCC 49558 / DSM 4304 / JCM 9628 / NBRC 100126 / VC-16</strain>
    </source>
</reference>
<sequence length="390" mass="44127">MLSKPMELLRPSKGMINVHPIQRGGILTEEARKVLLEWGDGYSMCDICLEGRVDLLDKPPVKRFKEEVAEFLGMDEVRFTAGARHAKFVAMSGFKGALVVDSLAHYTTYIAAELNGLRVYEVPNTGYPEFRIEAESYTDVFEKVKEETGDYPAVALLTHADYKYGNLADAKKVAEICRDYGIPLILNTAYTSGIMEVSGRETGCDFIVASGHKSWAATAPIGILATTFEFAERVFRVSEVRGNWSGRAFTKKEVALFGCSPVYGLPLVTLMASFPVVKERVKRWKEEVEKARWFVEEMEKIEGVMLLGERPKNHTLMNFETPSFNLIAKKHRRKGYFLYHELKERGIFGVQPGMTRNVKLNVYGLSWEEVERVAEAFKEIAEKYGLEVED</sequence>
<feature type="chain" id="PRO_0000107478" description="O-phospho-L-seryl-tRNA:Cys-tRNA synthase 2">
    <location>
        <begin position="1"/>
        <end position="390"/>
    </location>
</feature>
<feature type="binding site" evidence="1">
    <location>
        <begin position="83"/>
        <end position="84"/>
    </location>
    <ligand>
        <name>pyridoxal 5'-phosphate</name>
        <dbReference type="ChEBI" id="CHEBI:597326"/>
    </ligand>
</feature>
<feature type="binding site" evidence="1">
    <location>
        <position position="187"/>
    </location>
    <ligand>
        <name>pyridoxal 5'-phosphate</name>
        <dbReference type="ChEBI" id="CHEBI:597326"/>
    </ligand>
</feature>
<feature type="binding site" evidence="1">
    <location>
        <begin position="210"/>
        <end position="212"/>
    </location>
    <ligand>
        <name>pyridoxal 5'-phosphate</name>
        <dbReference type="ChEBI" id="CHEBI:597326"/>
    </ligand>
</feature>
<feature type="modified residue" description="N6-(pyridoxal phosphate)lysine" evidence="1">
    <location>
        <position position="213"/>
    </location>
</feature>
<evidence type="ECO:0000255" key="1">
    <source>
        <dbReference type="HAMAP-Rule" id="MF_01675"/>
    </source>
</evidence>
<keyword id="KW-0648">Protein biosynthesis</keyword>
<keyword id="KW-0663">Pyridoxal phosphate</keyword>
<keyword id="KW-1185">Reference proteome</keyword>
<keyword id="KW-0808">Transferase</keyword>
<comment type="function">
    <text evidence="1">Converts O-phospho-L-seryl-tRNA(Cys) (Sep-tRNA(Cys)) to L-cysteinyl-tRNA(Cys) (Cys-tRNA(Cys)).</text>
</comment>
<comment type="catalytic activity">
    <reaction evidence="1">
        <text>O-phospho-L-seryl-tRNA(Cys) + hydrogen sulfide + H(+) = L-cysteinyl-tRNA(Cys) + phosphate</text>
        <dbReference type="Rhea" id="RHEA:25686"/>
        <dbReference type="Rhea" id="RHEA-COMP:9679"/>
        <dbReference type="Rhea" id="RHEA-COMP:9719"/>
        <dbReference type="ChEBI" id="CHEBI:15378"/>
        <dbReference type="ChEBI" id="CHEBI:29919"/>
        <dbReference type="ChEBI" id="CHEBI:43474"/>
        <dbReference type="ChEBI" id="CHEBI:78517"/>
        <dbReference type="ChEBI" id="CHEBI:78551"/>
        <dbReference type="EC" id="2.5.1.73"/>
    </reaction>
</comment>
<comment type="cofactor">
    <cofactor evidence="1">
        <name>pyridoxal 5'-phosphate</name>
        <dbReference type="ChEBI" id="CHEBI:597326"/>
    </cofactor>
</comment>
<comment type="subunit">
    <text evidence="1">Homodimer. Interacts with SepRS.</text>
</comment>
<comment type="similarity">
    <text evidence="1">Belongs to the SepCysS family.</text>
</comment>
<dbReference type="EC" id="2.5.1.73" evidence="1"/>
<dbReference type="EMBL" id="AE000782">
    <property type="protein sequence ID" value="AAB91042.1"/>
    <property type="molecule type" value="Genomic_DNA"/>
</dbReference>
<dbReference type="PIR" id="E69272">
    <property type="entry name" value="E69272"/>
</dbReference>
<dbReference type="RefSeq" id="WP_010877693.1">
    <property type="nucleotide sequence ID" value="NC_000917.1"/>
</dbReference>
<dbReference type="SMR" id="O30056"/>
<dbReference type="STRING" id="224325.AF_0181"/>
<dbReference type="PaxDb" id="224325-AF_0181"/>
<dbReference type="EnsemblBacteria" id="AAB91042">
    <property type="protein sequence ID" value="AAB91042"/>
    <property type="gene ID" value="AF_0181"/>
</dbReference>
<dbReference type="GeneID" id="1483392"/>
<dbReference type="KEGG" id="afu:AF_0181"/>
<dbReference type="eggNOG" id="arCOG00091">
    <property type="taxonomic scope" value="Archaea"/>
</dbReference>
<dbReference type="HOGENOM" id="CLU_060476_0_0_2"/>
<dbReference type="OrthoDB" id="5817at2157"/>
<dbReference type="PhylomeDB" id="O30056"/>
<dbReference type="Proteomes" id="UP000002199">
    <property type="component" value="Chromosome"/>
</dbReference>
<dbReference type="GO" id="GO:0043766">
    <property type="term" value="F:Sep-tRNA:Cys-tRNA synthase activity"/>
    <property type="evidence" value="ECO:0007669"/>
    <property type="project" value="UniProtKB-UniRule"/>
</dbReference>
<dbReference type="GO" id="GO:0006412">
    <property type="term" value="P:translation"/>
    <property type="evidence" value="ECO:0007669"/>
    <property type="project" value="UniProtKB-KW"/>
</dbReference>
<dbReference type="Gene3D" id="3.90.1150.10">
    <property type="entry name" value="Aspartate Aminotransferase, domain 1"/>
    <property type="match status" value="1"/>
</dbReference>
<dbReference type="Gene3D" id="3.40.640.10">
    <property type="entry name" value="Type I PLP-dependent aspartate aminotransferase-like (Major domain)"/>
    <property type="match status" value="1"/>
</dbReference>
<dbReference type="HAMAP" id="MF_01675">
    <property type="entry name" value="Sep_Cys_tRNA_synth"/>
    <property type="match status" value="1"/>
</dbReference>
<dbReference type="InterPro" id="IPR015424">
    <property type="entry name" value="PyrdxlP-dep_Trfase"/>
</dbReference>
<dbReference type="InterPro" id="IPR015421">
    <property type="entry name" value="PyrdxlP-dep_Trfase_major"/>
</dbReference>
<dbReference type="InterPro" id="IPR015422">
    <property type="entry name" value="PyrdxlP-dep_Trfase_small"/>
</dbReference>
<dbReference type="InterPro" id="IPR013375">
    <property type="entry name" value="Sep_Cys-tRNA_synth_arc"/>
</dbReference>
<dbReference type="InterPro" id="IPR008829">
    <property type="entry name" value="SepSecS/SepCysS"/>
</dbReference>
<dbReference type="NCBIfam" id="NF006810">
    <property type="entry name" value="PRK09331.1"/>
    <property type="match status" value="1"/>
</dbReference>
<dbReference type="NCBIfam" id="TIGR02539">
    <property type="entry name" value="SepCysS"/>
    <property type="match status" value="1"/>
</dbReference>
<dbReference type="Pfam" id="PF05889">
    <property type="entry name" value="SepSecS"/>
    <property type="match status" value="1"/>
</dbReference>
<dbReference type="SUPFAM" id="SSF53383">
    <property type="entry name" value="PLP-dependent transferases"/>
    <property type="match status" value="1"/>
</dbReference>
<proteinExistence type="inferred from homology"/>